<protein>
    <recommendedName>
        <fullName evidence="1">Large ribosomal subunit protein bL12</fullName>
    </recommendedName>
    <alternativeName>
        <fullName evidence="2">50S ribosomal protein L7/L12</fullName>
    </alternativeName>
</protein>
<organism>
    <name type="scientific">Tremblaya princeps</name>
    <dbReference type="NCBI Taxonomy" id="189385"/>
    <lineage>
        <taxon>Bacteria</taxon>
        <taxon>Pseudomonadati</taxon>
        <taxon>Pseudomonadota</taxon>
        <taxon>Betaproteobacteria</taxon>
        <taxon>Candidatus Tremblaya</taxon>
    </lineage>
</organism>
<reference key="1">
    <citation type="journal article" date="2002" name="Appl. Environ. Microbiol.">
        <title>The genetic properties of the primary endosymbionts of mealybugs differ from those of other endosymbionts of plant sap-sucking insects.</title>
        <authorList>
            <person name="Baumann L."/>
            <person name="Thao M.L."/>
            <person name="Hess J.M."/>
            <person name="Johnson M.W."/>
            <person name="Baumann P."/>
        </authorList>
    </citation>
    <scope>NUCLEOTIDE SEQUENCE [GENOMIC DNA]</scope>
</reference>
<accession>Q8KTP9</accession>
<comment type="function">
    <text evidence="1">Forms part of the ribosomal stalk which helps the ribosome interact with GTP-bound translation factors. Is thus essential for accurate translation.</text>
</comment>
<comment type="subunit">
    <text evidence="1">Homodimer. Part of the ribosomal stalk of the 50S ribosomal subunit. Forms a multimeric L10(L12)X complex, where L10 forms an elongated spine to which 2 to 4 L12 dimers bind in a sequential fashion. Binds GTP-bound translation factors.</text>
</comment>
<comment type="similarity">
    <text evidence="1">Belongs to the bacterial ribosomal protein bL12 family.</text>
</comment>
<evidence type="ECO:0000255" key="1">
    <source>
        <dbReference type="HAMAP-Rule" id="MF_00368"/>
    </source>
</evidence>
<evidence type="ECO:0000305" key="2"/>
<dbReference type="EMBL" id="AF481103">
    <property type="protein sequence ID" value="AAM75999.1"/>
    <property type="molecule type" value="Genomic_DNA"/>
</dbReference>
<dbReference type="SMR" id="Q8KTP9"/>
<dbReference type="STRING" id="1053648.TCP_119"/>
<dbReference type="GO" id="GO:0005737">
    <property type="term" value="C:cytoplasm"/>
    <property type="evidence" value="ECO:0007669"/>
    <property type="project" value="UniProtKB-ARBA"/>
</dbReference>
<dbReference type="GO" id="GO:1990904">
    <property type="term" value="C:ribonucleoprotein complex"/>
    <property type="evidence" value="ECO:0007669"/>
    <property type="project" value="UniProtKB-KW"/>
</dbReference>
<dbReference type="GO" id="GO:0005840">
    <property type="term" value="C:ribosome"/>
    <property type="evidence" value="ECO:0007669"/>
    <property type="project" value="UniProtKB-KW"/>
</dbReference>
<dbReference type="GO" id="GO:0003729">
    <property type="term" value="F:mRNA binding"/>
    <property type="evidence" value="ECO:0007669"/>
    <property type="project" value="TreeGrafter"/>
</dbReference>
<dbReference type="GO" id="GO:0003735">
    <property type="term" value="F:structural constituent of ribosome"/>
    <property type="evidence" value="ECO:0007669"/>
    <property type="project" value="InterPro"/>
</dbReference>
<dbReference type="GO" id="GO:0006412">
    <property type="term" value="P:translation"/>
    <property type="evidence" value="ECO:0007669"/>
    <property type="project" value="UniProtKB-UniRule"/>
</dbReference>
<dbReference type="CDD" id="cd00387">
    <property type="entry name" value="Ribosomal_L7_L12"/>
    <property type="match status" value="1"/>
</dbReference>
<dbReference type="FunFam" id="3.30.1390.10:FF:000001">
    <property type="entry name" value="50S ribosomal protein L7/L12"/>
    <property type="match status" value="1"/>
</dbReference>
<dbReference type="Gene3D" id="3.30.1390.10">
    <property type="match status" value="1"/>
</dbReference>
<dbReference type="Gene3D" id="1.20.5.710">
    <property type="entry name" value="Single helix bin"/>
    <property type="match status" value="1"/>
</dbReference>
<dbReference type="HAMAP" id="MF_00368">
    <property type="entry name" value="Ribosomal_bL12"/>
    <property type="match status" value="1"/>
</dbReference>
<dbReference type="InterPro" id="IPR000206">
    <property type="entry name" value="Ribosomal_bL12"/>
</dbReference>
<dbReference type="InterPro" id="IPR013823">
    <property type="entry name" value="Ribosomal_bL12_C"/>
</dbReference>
<dbReference type="InterPro" id="IPR014719">
    <property type="entry name" value="Ribosomal_bL12_C/ClpS-like"/>
</dbReference>
<dbReference type="InterPro" id="IPR008932">
    <property type="entry name" value="Ribosomal_bL12_oligo"/>
</dbReference>
<dbReference type="InterPro" id="IPR036235">
    <property type="entry name" value="Ribosomal_bL12_oligo_N_sf"/>
</dbReference>
<dbReference type="NCBIfam" id="TIGR00855">
    <property type="entry name" value="L12"/>
    <property type="match status" value="1"/>
</dbReference>
<dbReference type="PANTHER" id="PTHR45987">
    <property type="entry name" value="39S RIBOSOMAL PROTEIN L12"/>
    <property type="match status" value="1"/>
</dbReference>
<dbReference type="PANTHER" id="PTHR45987:SF4">
    <property type="entry name" value="LARGE RIBOSOMAL SUBUNIT PROTEIN BL12M"/>
    <property type="match status" value="1"/>
</dbReference>
<dbReference type="Pfam" id="PF00542">
    <property type="entry name" value="Ribosomal_L12"/>
    <property type="match status" value="1"/>
</dbReference>
<dbReference type="Pfam" id="PF16320">
    <property type="entry name" value="Ribosomal_L12_N"/>
    <property type="match status" value="1"/>
</dbReference>
<dbReference type="SUPFAM" id="SSF54736">
    <property type="entry name" value="ClpS-like"/>
    <property type="match status" value="1"/>
</dbReference>
<dbReference type="SUPFAM" id="SSF48300">
    <property type="entry name" value="Ribosomal protein L7/12, oligomerisation (N-terminal) domain"/>
    <property type="match status" value="1"/>
</dbReference>
<gene>
    <name evidence="1" type="primary">rplL</name>
    <name type="synonym">rpl7/12</name>
</gene>
<name>RL7_TREPR</name>
<keyword id="KW-0687">Ribonucleoprotein</keyword>
<keyword id="KW-0689">Ribosomal protein</keyword>
<proteinExistence type="inferred from homology"/>
<feature type="chain" id="PRO_0000157514" description="Large ribosomal subunit protein bL12">
    <location>
        <begin position="1"/>
        <end position="121"/>
    </location>
</feature>
<sequence length="121" mass="12914">MSNDDIVSRIASMTALELSDLVGLLEQRFNISRIAPAPCQPGSNAVEAEQDRRDRKVFLTHSGSNKIAVIRAVRDVTKLGLKESKGLVDSAPSLVAEGLSADEAEDIRAKVEAAGAKAEVR</sequence>